<dbReference type="EC" id="2.1.1.199" evidence="1"/>
<dbReference type="EMBL" id="CP000235">
    <property type="protein sequence ID" value="ABD43518.1"/>
    <property type="molecule type" value="Genomic_DNA"/>
</dbReference>
<dbReference type="RefSeq" id="WP_011450793.1">
    <property type="nucleotide sequence ID" value="NC_007797.1"/>
</dbReference>
<dbReference type="SMR" id="Q2GK29"/>
<dbReference type="STRING" id="212042.APH_0690"/>
<dbReference type="PaxDb" id="212042-APH_0690"/>
<dbReference type="EnsemblBacteria" id="ABD43518">
    <property type="protein sequence ID" value="ABD43518"/>
    <property type="gene ID" value="APH_0690"/>
</dbReference>
<dbReference type="KEGG" id="aph:APH_0690"/>
<dbReference type="PATRIC" id="fig|212042.8.peg.745"/>
<dbReference type="eggNOG" id="COG0275">
    <property type="taxonomic scope" value="Bacteria"/>
</dbReference>
<dbReference type="HOGENOM" id="CLU_038422_1_0_5"/>
<dbReference type="Proteomes" id="UP000001943">
    <property type="component" value="Chromosome"/>
</dbReference>
<dbReference type="GO" id="GO:0005737">
    <property type="term" value="C:cytoplasm"/>
    <property type="evidence" value="ECO:0007669"/>
    <property type="project" value="UniProtKB-SubCell"/>
</dbReference>
<dbReference type="GO" id="GO:0071424">
    <property type="term" value="F:rRNA (cytosine-N4-)-methyltransferase activity"/>
    <property type="evidence" value="ECO:0007669"/>
    <property type="project" value="UniProtKB-UniRule"/>
</dbReference>
<dbReference type="GO" id="GO:0070475">
    <property type="term" value="P:rRNA base methylation"/>
    <property type="evidence" value="ECO:0007669"/>
    <property type="project" value="UniProtKB-UniRule"/>
</dbReference>
<dbReference type="Gene3D" id="1.10.150.170">
    <property type="entry name" value="Putative methyltransferase TM0872, insert domain"/>
    <property type="match status" value="1"/>
</dbReference>
<dbReference type="Gene3D" id="3.40.50.150">
    <property type="entry name" value="Vaccinia Virus protein VP39"/>
    <property type="match status" value="1"/>
</dbReference>
<dbReference type="HAMAP" id="MF_01007">
    <property type="entry name" value="16SrRNA_methyltr_H"/>
    <property type="match status" value="1"/>
</dbReference>
<dbReference type="InterPro" id="IPR002903">
    <property type="entry name" value="RsmH"/>
</dbReference>
<dbReference type="InterPro" id="IPR023397">
    <property type="entry name" value="SAM-dep_MeTrfase_MraW_recog"/>
</dbReference>
<dbReference type="InterPro" id="IPR029063">
    <property type="entry name" value="SAM-dependent_MTases_sf"/>
</dbReference>
<dbReference type="NCBIfam" id="TIGR00006">
    <property type="entry name" value="16S rRNA (cytosine(1402)-N(4))-methyltransferase RsmH"/>
    <property type="match status" value="1"/>
</dbReference>
<dbReference type="PANTHER" id="PTHR11265:SF0">
    <property type="entry name" value="12S RRNA N4-METHYLCYTIDINE METHYLTRANSFERASE"/>
    <property type="match status" value="1"/>
</dbReference>
<dbReference type="PANTHER" id="PTHR11265">
    <property type="entry name" value="S-ADENOSYL-METHYLTRANSFERASE MRAW"/>
    <property type="match status" value="1"/>
</dbReference>
<dbReference type="Pfam" id="PF01795">
    <property type="entry name" value="Methyltransf_5"/>
    <property type="match status" value="1"/>
</dbReference>
<dbReference type="PIRSF" id="PIRSF004486">
    <property type="entry name" value="MraW"/>
    <property type="match status" value="1"/>
</dbReference>
<dbReference type="SUPFAM" id="SSF81799">
    <property type="entry name" value="Putative methyltransferase TM0872, insert domain"/>
    <property type="match status" value="1"/>
</dbReference>
<dbReference type="SUPFAM" id="SSF53335">
    <property type="entry name" value="S-adenosyl-L-methionine-dependent methyltransferases"/>
    <property type="match status" value="1"/>
</dbReference>
<feature type="chain" id="PRO_0000318868" description="Ribosomal RNA small subunit methyltransferase H">
    <location>
        <begin position="1"/>
        <end position="295"/>
    </location>
</feature>
<feature type="region of interest" description="Disordered" evidence="2">
    <location>
        <begin position="275"/>
        <end position="295"/>
    </location>
</feature>
<feature type="binding site" evidence="1">
    <location>
        <begin position="32"/>
        <end position="34"/>
    </location>
    <ligand>
        <name>S-adenosyl-L-methionine</name>
        <dbReference type="ChEBI" id="CHEBI:59789"/>
    </ligand>
</feature>
<feature type="binding site" evidence="1">
    <location>
        <position position="50"/>
    </location>
    <ligand>
        <name>S-adenosyl-L-methionine</name>
        <dbReference type="ChEBI" id="CHEBI:59789"/>
    </ligand>
</feature>
<feature type="binding site" evidence="1">
    <location>
        <position position="77"/>
    </location>
    <ligand>
        <name>S-adenosyl-L-methionine</name>
        <dbReference type="ChEBI" id="CHEBI:59789"/>
    </ligand>
</feature>
<feature type="binding site" evidence="1">
    <location>
        <position position="98"/>
    </location>
    <ligand>
        <name>S-adenosyl-L-methionine</name>
        <dbReference type="ChEBI" id="CHEBI:59789"/>
    </ligand>
</feature>
<feature type="binding site" evidence="1">
    <location>
        <position position="105"/>
    </location>
    <ligand>
        <name>S-adenosyl-L-methionine</name>
        <dbReference type="ChEBI" id="CHEBI:59789"/>
    </ligand>
</feature>
<protein>
    <recommendedName>
        <fullName evidence="1">Ribosomal RNA small subunit methyltransferase H</fullName>
        <ecNumber evidence="1">2.1.1.199</ecNumber>
    </recommendedName>
    <alternativeName>
        <fullName evidence="1">16S rRNA m(4)C1402 methyltransferase</fullName>
    </alternativeName>
    <alternativeName>
        <fullName evidence="1">rRNA (cytosine-N(4)-)-methyltransferase RsmH</fullName>
    </alternativeName>
</protein>
<sequence length="295" mass="33135">MDSHRPVLLNEMLELLSPKDGAVYVDATFGGGGYSRGILERAKCTVLAIDQDPIASEFYQSLHSQFPGRVHFFLSKFSRLREALQHFDHNQVDGVVFDVGVSSMQLSDPDRGFSFMKEGPLDMRMDMLRSQSKSAATFVNSLSEKDMADVIFYYGGERLSRRVTRAIISARESNNKIRNTSDLAKIIRSVVPRSKANPIDPATRTFQAIRIWVNDELEELKAGLEAASQIVGVGGKIIVTSFHSLEDRIVKHKFNALREKGFQLINKKAIKPTEKEISENTRSRSAKLRGIVKEE</sequence>
<gene>
    <name evidence="1" type="primary">rsmH</name>
    <name type="synonym">mraW</name>
    <name type="ordered locus">APH_0690</name>
</gene>
<keyword id="KW-0963">Cytoplasm</keyword>
<keyword id="KW-0489">Methyltransferase</keyword>
<keyword id="KW-0698">rRNA processing</keyword>
<keyword id="KW-0949">S-adenosyl-L-methionine</keyword>
<keyword id="KW-0808">Transferase</keyword>
<proteinExistence type="inferred from homology"/>
<name>RSMH_ANAPZ</name>
<organism>
    <name type="scientific">Anaplasma phagocytophilum (strain HZ)</name>
    <dbReference type="NCBI Taxonomy" id="212042"/>
    <lineage>
        <taxon>Bacteria</taxon>
        <taxon>Pseudomonadati</taxon>
        <taxon>Pseudomonadota</taxon>
        <taxon>Alphaproteobacteria</taxon>
        <taxon>Rickettsiales</taxon>
        <taxon>Anaplasmataceae</taxon>
        <taxon>Anaplasma</taxon>
        <taxon>phagocytophilum group</taxon>
    </lineage>
</organism>
<accession>Q2GK29</accession>
<evidence type="ECO:0000255" key="1">
    <source>
        <dbReference type="HAMAP-Rule" id="MF_01007"/>
    </source>
</evidence>
<evidence type="ECO:0000256" key="2">
    <source>
        <dbReference type="SAM" id="MobiDB-lite"/>
    </source>
</evidence>
<reference key="1">
    <citation type="journal article" date="2006" name="PLoS Genet.">
        <title>Comparative genomics of emerging human ehrlichiosis agents.</title>
        <authorList>
            <person name="Dunning Hotopp J.C."/>
            <person name="Lin M."/>
            <person name="Madupu R."/>
            <person name="Crabtree J."/>
            <person name="Angiuoli S.V."/>
            <person name="Eisen J.A."/>
            <person name="Seshadri R."/>
            <person name="Ren Q."/>
            <person name="Wu M."/>
            <person name="Utterback T.R."/>
            <person name="Smith S."/>
            <person name="Lewis M."/>
            <person name="Khouri H."/>
            <person name="Zhang C."/>
            <person name="Niu H."/>
            <person name="Lin Q."/>
            <person name="Ohashi N."/>
            <person name="Zhi N."/>
            <person name="Nelson W.C."/>
            <person name="Brinkac L.M."/>
            <person name="Dodson R.J."/>
            <person name="Rosovitz M.J."/>
            <person name="Sundaram J.P."/>
            <person name="Daugherty S.C."/>
            <person name="Davidsen T."/>
            <person name="Durkin A.S."/>
            <person name="Gwinn M.L."/>
            <person name="Haft D.H."/>
            <person name="Selengut J.D."/>
            <person name="Sullivan S.A."/>
            <person name="Zafar N."/>
            <person name="Zhou L."/>
            <person name="Benahmed F."/>
            <person name="Forberger H."/>
            <person name="Halpin R."/>
            <person name="Mulligan S."/>
            <person name="Robinson J."/>
            <person name="White O."/>
            <person name="Rikihisa Y."/>
            <person name="Tettelin H."/>
        </authorList>
    </citation>
    <scope>NUCLEOTIDE SEQUENCE [LARGE SCALE GENOMIC DNA]</scope>
    <source>
        <strain>HZ</strain>
    </source>
</reference>
<comment type="function">
    <text evidence="1">Specifically methylates the N4 position of cytidine in position 1402 (C1402) of 16S rRNA.</text>
</comment>
<comment type="catalytic activity">
    <reaction evidence="1">
        <text>cytidine(1402) in 16S rRNA + S-adenosyl-L-methionine = N(4)-methylcytidine(1402) in 16S rRNA + S-adenosyl-L-homocysteine + H(+)</text>
        <dbReference type="Rhea" id="RHEA:42928"/>
        <dbReference type="Rhea" id="RHEA-COMP:10286"/>
        <dbReference type="Rhea" id="RHEA-COMP:10287"/>
        <dbReference type="ChEBI" id="CHEBI:15378"/>
        <dbReference type="ChEBI" id="CHEBI:57856"/>
        <dbReference type="ChEBI" id="CHEBI:59789"/>
        <dbReference type="ChEBI" id="CHEBI:74506"/>
        <dbReference type="ChEBI" id="CHEBI:82748"/>
        <dbReference type="EC" id="2.1.1.199"/>
    </reaction>
</comment>
<comment type="subcellular location">
    <subcellularLocation>
        <location evidence="1">Cytoplasm</location>
    </subcellularLocation>
</comment>
<comment type="similarity">
    <text evidence="1">Belongs to the methyltransferase superfamily. RsmH family.</text>
</comment>